<feature type="chain" id="PRO_1000133014" description="Enolase">
    <location>
        <begin position="1"/>
        <end position="428"/>
    </location>
</feature>
<feature type="active site" description="Proton donor" evidence="1">
    <location>
        <position position="205"/>
    </location>
</feature>
<feature type="active site" description="Proton acceptor" evidence="1">
    <location>
        <position position="337"/>
    </location>
</feature>
<feature type="binding site" evidence="1">
    <location>
        <position position="163"/>
    </location>
    <ligand>
        <name>(2R)-2-phosphoglycerate</name>
        <dbReference type="ChEBI" id="CHEBI:58289"/>
    </ligand>
</feature>
<feature type="binding site" evidence="1">
    <location>
        <position position="242"/>
    </location>
    <ligand>
        <name>Mg(2+)</name>
        <dbReference type="ChEBI" id="CHEBI:18420"/>
    </ligand>
</feature>
<feature type="binding site" evidence="1">
    <location>
        <position position="285"/>
    </location>
    <ligand>
        <name>Mg(2+)</name>
        <dbReference type="ChEBI" id="CHEBI:18420"/>
    </ligand>
</feature>
<feature type="binding site" evidence="1">
    <location>
        <position position="312"/>
    </location>
    <ligand>
        <name>Mg(2+)</name>
        <dbReference type="ChEBI" id="CHEBI:18420"/>
    </ligand>
</feature>
<feature type="binding site" evidence="1">
    <location>
        <position position="337"/>
    </location>
    <ligand>
        <name>(2R)-2-phosphoglycerate</name>
        <dbReference type="ChEBI" id="CHEBI:58289"/>
    </ligand>
</feature>
<feature type="binding site" evidence="1">
    <location>
        <position position="366"/>
    </location>
    <ligand>
        <name>(2R)-2-phosphoglycerate</name>
        <dbReference type="ChEBI" id="CHEBI:58289"/>
    </ligand>
</feature>
<feature type="binding site" evidence="1">
    <location>
        <position position="367"/>
    </location>
    <ligand>
        <name>(2R)-2-phosphoglycerate</name>
        <dbReference type="ChEBI" id="CHEBI:58289"/>
    </ligand>
</feature>
<feature type="binding site" evidence="1">
    <location>
        <position position="388"/>
    </location>
    <ligand>
        <name>(2R)-2-phosphoglycerate</name>
        <dbReference type="ChEBI" id="CHEBI:58289"/>
    </ligand>
</feature>
<protein>
    <recommendedName>
        <fullName evidence="1">Enolase</fullName>
        <ecNumber evidence="1">4.2.1.11</ecNumber>
    </recommendedName>
    <alternativeName>
        <fullName evidence="1">2-phospho-D-glycerate hydro-lyase</fullName>
    </alternativeName>
    <alternativeName>
        <fullName evidence="1">2-phosphoglycerate dehydratase</fullName>
    </alternativeName>
</protein>
<keyword id="KW-0963">Cytoplasm</keyword>
<keyword id="KW-0324">Glycolysis</keyword>
<keyword id="KW-0456">Lyase</keyword>
<keyword id="KW-0460">Magnesium</keyword>
<keyword id="KW-0479">Metal-binding</keyword>
<keyword id="KW-1185">Reference proteome</keyword>
<keyword id="KW-0964">Secreted</keyword>
<evidence type="ECO:0000255" key="1">
    <source>
        <dbReference type="HAMAP-Rule" id="MF_00318"/>
    </source>
</evidence>
<accession>C0QRV6</accession>
<name>ENO_PERMH</name>
<sequence>MSVIVDIRGREVLDSRGNPTVEAEVVLESGVVATALVPSGASTGETEAVELRDGDKNRFKGKGVLKAVDNINTKIADLLIGENALDQVRIDRLMLELDGTENKSNLGANAILAVSLAVARAAAMELDIPLYRYLGGTNAKVLPVPLMNVINGGAHADNNLDFQEFMIVPVFGGRFKEALRCGVEIFHTLKTVLKDKGYSTNVGDEGGFAPALNSTKEALDILMDAIKKAGYEPGEDVLLAIDAASTEFYDKERKVYRFEGEELTADDMIVLYEEIEGTYPIISIEDGLAEDDIEGWKKLTKALGDKIQLVGDDLFTTNPKLIKKGIEEGIANSVLVKLNQIGSLTETLDAIELAKVASYTNVISHRSGETEDTFIADLAVATNAGQIKTGSASRTDRIAKYNQLLRIEEELGEDAVFKGKEAYSKFIR</sequence>
<comment type="function">
    <text evidence="1">Catalyzes the reversible conversion of 2-phosphoglycerate (2-PG) into phosphoenolpyruvate (PEP). It is essential for the degradation of carbohydrates via glycolysis.</text>
</comment>
<comment type="catalytic activity">
    <reaction evidence="1">
        <text>(2R)-2-phosphoglycerate = phosphoenolpyruvate + H2O</text>
        <dbReference type="Rhea" id="RHEA:10164"/>
        <dbReference type="ChEBI" id="CHEBI:15377"/>
        <dbReference type="ChEBI" id="CHEBI:58289"/>
        <dbReference type="ChEBI" id="CHEBI:58702"/>
        <dbReference type="EC" id="4.2.1.11"/>
    </reaction>
</comment>
<comment type="cofactor">
    <cofactor evidence="1">
        <name>Mg(2+)</name>
        <dbReference type="ChEBI" id="CHEBI:18420"/>
    </cofactor>
    <text evidence="1">Binds a second Mg(2+) ion via substrate during catalysis.</text>
</comment>
<comment type="pathway">
    <text evidence="1">Carbohydrate degradation; glycolysis; pyruvate from D-glyceraldehyde 3-phosphate: step 4/5.</text>
</comment>
<comment type="subcellular location">
    <subcellularLocation>
        <location evidence="1">Cytoplasm</location>
    </subcellularLocation>
    <subcellularLocation>
        <location evidence="1">Secreted</location>
    </subcellularLocation>
    <subcellularLocation>
        <location evidence="1">Cell surface</location>
    </subcellularLocation>
    <text evidence="1">Fractions of enolase are present in both the cytoplasm and on the cell surface.</text>
</comment>
<comment type="similarity">
    <text evidence="1">Belongs to the enolase family.</text>
</comment>
<proteinExistence type="inferred from homology"/>
<dbReference type="EC" id="4.2.1.11" evidence="1"/>
<dbReference type="EMBL" id="CP001230">
    <property type="protein sequence ID" value="ACO03285.1"/>
    <property type="molecule type" value="Genomic_DNA"/>
</dbReference>
<dbReference type="RefSeq" id="WP_012675524.1">
    <property type="nucleotide sequence ID" value="NC_012440.1"/>
</dbReference>
<dbReference type="SMR" id="C0QRV6"/>
<dbReference type="STRING" id="123214.PERMA_1636"/>
<dbReference type="PaxDb" id="123214-PERMA_1636"/>
<dbReference type="KEGG" id="pmx:PERMA_1636"/>
<dbReference type="eggNOG" id="COG0148">
    <property type="taxonomic scope" value="Bacteria"/>
</dbReference>
<dbReference type="HOGENOM" id="CLU_031223_2_1_0"/>
<dbReference type="OrthoDB" id="9804716at2"/>
<dbReference type="UniPathway" id="UPA00109">
    <property type="reaction ID" value="UER00187"/>
</dbReference>
<dbReference type="Proteomes" id="UP000001366">
    <property type="component" value="Chromosome"/>
</dbReference>
<dbReference type="GO" id="GO:0009986">
    <property type="term" value="C:cell surface"/>
    <property type="evidence" value="ECO:0007669"/>
    <property type="project" value="UniProtKB-SubCell"/>
</dbReference>
<dbReference type="GO" id="GO:0005576">
    <property type="term" value="C:extracellular region"/>
    <property type="evidence" value="ECO:0007669"/>
    <property type="project" value="UniProtKB-SubCell"/>
</dbReference>
<dbReference type="GO" id="GO:0000015">
    <property type="term" value="C:phosphopyruvate hydratase complex"/>
    <property type="evidence" value="ECO:0007669"/>
    <property type="project" value="InterPro"/>
</dbReference>
<dbReference type="GO" id="GO:0000287">
    <property type="term" value="F:magnesium ion binding"/>
    <property type="evidence" value="ECO:0007669"/>
    <property type="project" value="UniProtKB-UniRule"/>
</dbReference>
<dbReference type="GO" id="GO:0004634">
    <property type="term" value="F:phosphopyruvate hydratase activity"/>
    <property type="evidence" value="ECO:0007669"/>
    <property type="project" value="UniProtKB-UniRule"/>
</dbReference>
<dbReference type="GO" id="GO:0006096">
    <property type="term" value="P:glycolytic process"/>
    <property type="evidence" value="ECO:0007669"/>
    <property type="project" value="UniProtKB-UniRule"/>
</dbReference>
<dbReference type="CDD" id="cd03313">
    <property type="entry name" value="enolase"/>
    <property type="match status" value="1"/>
</dbReference>
<dbReference type="FunFam" id="3.20.20.120:FF:000001">
    <property type="entry name" value="Enolase"/>
    <property type="match status" value="1"/>
</dbReference>
<dbReference type="FunFam" id="3.30.390.10:FF:000001">
    <property type="entry name" value="Enolase"/>
    <property type="match status" value="1"/>
</dbReference>
<dbReference type="Gene3D" id="3.20.20.120">
    <property type="entry name" value="Enolase-like C-terminal domain"/>
    <property type="match status" value="1"/>
</dbReference>
<dbReference type="Gene3D" id="3.30.390.10">
    <property type="entry name" value="Enolase-like, N-terminal domain"/>
    <property type="match status" value="1"/>
</dbReference>
<dbReference type="HAMAP" id="MF_00318">
    <property type="entry name" value="Enolase"/>
    <property type="match status" value="1"/>
</dbReference>
<dbReference type="InterPro" id="IPR000941">
    <property type="entry name" value="Enolase"/>
</dbReference>
<dbReference type="InterPro" id="IPR036849">
    <property type="entry name" value="Enolase-like_C_sf"/>
</dbReference>
<dbReference type="InterPro" id="IPR029017">
    <property type="entry name" value="Enolase-like_N"/>
</dbReference>
<dbReference type="InterPro" id="IPR020810">
    <property type="entry name" value="Enolase_C"/>
</dbReference>
<dbReference type="InterPro" id="IPR020809">
    <property type="entry name" value="Enolase_CS"/>
</dbReference>
<dbReference type="InterPro" id="IPR020811">
    <property type="entry name" value="Enolase_N"/>
</dbReference>
<dbReference type="NCBIfam" id="TIGR01060">
    <property type="entry name" value="eno"/>
    <property type="match status" value="1"/>
</dbReference>
<dbReference type="PANTHER" id="PTHR11902">
    <property type="entry name" value="ENOLASE"/>
    <property type="match status" value="1"/>
</dbReference>
<dbReference type="PANTHER" id="PTHR11902:SF1">
    <property type="entry name" value="ENOLASE"/>
    <property type="match status" value="1"/>
</dbReference>
<dbReference type="Pfam" id="PF00113">
    <property type="entry name" value="Enolase_C"/>
    <property type="match status" value="1"/>
</dbReference>
<dbReference type="Pfam" id="PF03952">
    <property type="entry name" value="Enolase_N"/>
    <property type="match status" value="1"/>
</dbReference>
<dbReference type="PIRSF" id="PIRSF001400">
    <property type="entry name" value="Enolase"/>
    <property type="match status" value="1"/>
</dbReference>
<dbReference type="PRINTS" id="PR00148">
    <property type="entry name" value="ENOLASE"/>
</dbReference>
<dbReference type="SFLD" id="SFLDF00002">
    <property type="entry name" value="enolase"/>
    <property type="match status" value="1"/>
</dbReference>
<dbReference type="SFLD" id="SFLDG00178">
    <property type="entry name" value="enolase"/>
    <property type="match status" value="1"/>
</dbReference>
<dbReference type="SMART" id="SM01192">
    <property type="entry name" value="Enolase_C"/>
    <property type="match status" value="1"/>
</dbReference>
<dbReference type="SMART" id="SM01193">
    <property type="entry name" value="Enolase_N"/>
    <property type="match status" value="1"/>
</dbReference>
<dbReference type="SUPFAM" id="SSF51604">
    <property type="entry name" value="Enolase C-terminal domain-like"/>
    <property type="match status" value="1"/>
</dbReference>
<dbReference type="SUPFAM" id="SSF54826">
    <property type="entry name" value="Enolase N-terminal domain-like"/>
    <property type="match status" value="1"/>
</dbReference>
<dbReference type="PROSITE" id="PS00164">
    <property type="entry name" value="ENOLASE"/>
    <property type="match status" value="1"/>
</dbReference>
<gene>
    <name evidence="1" type="primary">eno</name>
    <name type="ordered locus">PERMA_1636</name>
</gene>
<reference key="1">
    <citation type="journal article" date="2009" name="J. Bacteriol.">
        <title>Complete and draft genome sequences of six members of the Aquificales.</title>
        <authorList>
            <person name="Reysenbach A.-L."/>
            <person name="Hamamura N."/>
            <person name="Podar M."/>
            <person name="Griffiths E."/>
            <person name="Ferreira S."/>
            <person name="Hochstein R."/>
            <person name="Heidelberg J."/>
            <person name="Johnson J."/>
            <person name="Mead D."/>
            <person name="Pohorille A."/>
            <person name="Sarmiento M."/>
            <person name="Schweighofer K."/>
            <person name="Seshadri R."/>
            <person name="Voytek M.A."/>
        </authorList>
    </citation>
    <scope>NUCLEOTIDE SEQUENCE [LARGE SCALE GENOMIC DNA]</scope>
    <source>
        <strain>DSM 14350 / EX-H1</strain>
    </source>
</reference>
<organism>
    <name type="scientific">Persephonella marina (strain DSM 14350 / EX-H1)</name>
    <dbReference type="NCBI Taxonomy" id="123214"/>
    <lineage>
        <taxon>Bacteria</taxon>
        <taxon>Pseudomonadati</taxon>
        <taxon>Aquificota</taxon>
        <taxon>Aquificia</taxon>
        <taxon>Aquificales</taxon>
        <taxon>Hydrogenothermaceae</taxon>
        <taxon>Persephonella</taxon>
    </lineage>
</organism>